<name>IF2_BURCJ</name>
<evidence type="ECO:0000250" key="1"/>
<evidence type="ECO:0000255" key="2">
    <source>
        <dbReference type="HAMAP-Rule" id="MF_00100"/>
    </source>
</evidence>
<evidence type="ECO:0000256" key="3">
    <source>
        <dbReference type="SAM" id="MobiDB-lite"/>
    </source>
</evidence>
<gene>
    <name evidence="2" type="primary">infB</name>
    <name type="ordered locus">BceJ2315_14730</name>
    <name type="ORF">BCAL1507</name>
</gene>
<protein>
    <recommendedName>
        <fullName evidence="2">Translation initiation factor IF-2</fullName>
    </recommendedName>
</protein>
<reference key="1">
    <citation type="journal article" date="2009" name="J. Bacteriol.">
        <title>The genome of Burkholderia cenocepacia J2315, an epidemic pathogen of cystic fibrosis patients.</title>
        <authorList>
            <person name="Holden M.T."/>
            <person name="Seth-Smith H.M."/>
            <person name="Crossman L.C."/>
            <person name="Sebaihia M."/>
            <person name="Bentley S.D."/>
            <person name="Cerdeno-Tarraga A.M."/>
            <person name="Thomson N.R."/>
            <person name="Bason N."/>
            <person name="Quail M.A."/>
            <person name="Sharp S."/>
            <person name="Cherevach I."/>
            <person name="Churcher C."/>
            <person name="Goodhead I."/>
            <person name="Hauser H."/>
            <person name="Holroyd N."/>
            <person name="Mungall K."/>
            <person name="Scott P."/>
            <person name="Walker D."/>
            <person name="White B."/>
            <person name="Rose H."/>
            <person name="Iversen P."/>
            <person name="Mil-Homens D."/>
            <person name="Rocha E.P."/>
            <person name="Fialho A.M."/>
            <person name="Baldwin A."/>
            <person name="Dowson C."/>
            <person name="Barrell B.G."/>
            <person name="Govan J.R."/>
            <person name="Vandamme P."/>
            <person name="Hart C.A."/>
            <person name="Mahenthiralingam E."/>
            <person name="Parkhill J."/>
        </authorList>
    </citation>
    <scope>NUCLEOTIDE SEQUENCE [LARGE SCALE GENOMIC DNA]</scope>
    <source>
        <strain>ATCC BAA-245 / DSM 16553 / LMG 16656 / NCTC 13227 / J2315 / CF5610</strain>
    </source>
</reference>
<sequence length="971" mass="104109">MASNNVAQFAAELKMPAGVLLEQLQAAGVQKASEDDALSEADKARLLDHLRKSHGATDGDKRKITLTRKHTSEIKQSDATGKARTIQVEVRKKRTFVKRDDVSEGAEQGQAQVAEADDDAELKRREEEARREAELLEKQAQELRERQERLEREEAERRAREEAAEAERRRAEEEAAAKRAAAEAAAAQQAAAQQAAAEQETAPTQSAQDEARAAAERAAQREAAKKAEDAAREAADKARAEQEEISKRRAAAEAEARAIREMMNTPRKAVVKAAEPPKPAEPAKPAEAKGTLHKPAKPEGAQARPAVKKPAGAAAPATTQAPAGAGDRNKKPGAGKGGWQDDASKRRGIKTRGDSSGGVDRGWRGGPKGRGRHQDSASSFQAPTEPIVREVHVPETVSVADLAHKMSIKASEVIKVMMKMGQMVTINQVLDQETAMIIVEELGHRAVAAKLDDPEALLVEGETGTDAEQLPRPPVVTVMGHVDHGKTSLLDHIRRAKVAAGEAGGITQHIGAYHVDTPRGVITFLDTPGHEAFTAMRARGAKATDIVVLVVAADDGVMPQTKEAIAHAKAGGVPIVVAINKIDKPEANPDRVKQELVAEGVVPEEYGGDSPFVPVSAKTGAGIDDLLENVLLQAEVLELKAPVEAPAKGIVIEAKLDKGKGPVATILVQSGTLNRGDIVLAGTAYGRVRAMLDENGKPTKEAGPSIPVEIQGLSEVPGAGEEVIVLPDERKAREIALFRQGKFRDVKLAKQQAAKLESMLEQMGEGEVQNLPLIIKADVQGSQEALVQSLLKLSTDEVRVQIVHSAVGGISENDVNLATASKAVIIGFNTRADAQARKLAEANGIDIRYYNIIYDAVDEVKAAMSGMLAPEKREVITGMVEVRQVFKVPKVGTVAGCMVTDGIVKRSSSVRVLRNNVVIFTGELESLKRFKDDVKEVKQGFECGMSVKNFNDIIEGDQFEVFEVTEVARTL</sequence>
<keyword id="KW-0963">Cytoplasm</keyword>
<keyword id="KW-0342">GTP-binding</keyword>
<keyword id="KW-0396">Initiation factor</keyword>
<keyword id="KW-0547">Nucleotide-binding</keyword>
<keyword id="KW-0648">Protein biosynthesis</keyword>
<feature type="chain" id="PRO_1000093763" description="Translation initiation factor IF-2">
    <location>
        <begin position="1"/>
        <end position="971"/>
    </location>
</feature>
<feature type="domain" description="tr-type G">
    <location>
        <begin position="471"/>
        <end position="640"/>
    </location>
</feature>
<feature type="region of interest" description="Disordered" evidence="3">
    <location>
        <begin position="49"/>
        <end position="85"/>
    </location>
</feature>
<feature type="region of interest" description="Disordered" evidence="3">
    <location>
        <begin position="99"/>
        <end position="386"/>
    </location>
</feature>
<feature type="region of interest" description="G1" evidence="1">
    <location>
        <begin position="480"/>
        <end position="487"/>
    </location>
</feature>
<feature type="region of interest" description="G2" evidence="1">
    <location>
        <begin position="505"/>
        <end position="509"/>
    </location>
</feature>
<feature type="region of interest" description="G3" evidence="1">
    <location>
        <begin position="526"/>
        <end position="529"/>
    </location>
</feature>
<feature type="region of interest" description="G4" evidence="1">
    <location>
        <begin position="580"/>
        <end position="583"/>
    </location>
</feature>
<feature type="region of interest" description="G5" evidence="1">
    <location>
        <begin position="616"/>
        <end position="618"/>
    </location>
</feature>
<feature type="compositionally biased region" description="Basic and acidic residues" evidence="3">
    <location>
        <begin position="49"/>
        <end position="63"/>
    </location>
</feature>
<feature type="compositionally biased region" description="Low complexity" evidence="3">
    <location>
        <begin position="105"/>
        <end position="114"/>
    </location>
</feature>
<feature type="compositionally biased region" description="Basic and acidic residues" evidence="3">
    <location>
        <begin position="121"/>
        <end position="181"/>
    </location>
</feature>
<feature type="compositionally biased region" description="Low complexity" evidence="3">
    <location>
        <begin position="182"/>
        <end position="200"/>
    </location>
</feature>
<feature type="compositionally biased region" description="Basic and acidic residues" evidence="3">
    <location>
        <begin position="209"/>
        <end position="260"/>
    </location>
</feature>
<feature type="compositionally biased region" description="Low complexity" evidence="3">
    <location>
        <begin position="303"/>
        <end position="325"/>
    </location>
</feature>
<feature type="compositionally biased region" description="Gly residues" evidence="3">
    <location>
        <begin position="355"/>
        <end position="368"/>
    </location>
</feature>
<feature type="binding site" evidence="2">
    <location>
        <begin position="480"/>
        <end position="487"/>
    </location>
    <ligand>
        <name>GTP</name>
        <dbReference type="ChEBI" id="CHEBI:37565"/>
    </ligand>
</feature>
<feature type="binding site" evidence="2">
    <location>
        <begin position="526"/>
        <end position="530"/>
    </location>
    <ligand>
        <name>GTP</name>
        <dbReference type="ChEBI" id="CHEBI:37565"/>
    </ligand>
</feature>
<feature type="binding site" evidence="2">
    <location>
        <begin position="580"/>
        <end position="583"/>
    </location>
    <ligand>
        <name>GTP</name>
        <dbReference type="ChEBI" id="CHEBI:37565"/>
    </ligand>
</feature>
<proteinExistence type="inferred from homology"/>
<dbReference type="EMBL" id="AM747720">
    <property type="protein sequence ID" value="CAR51806.1"/>
    <property type="molecule type" value="Genomic_DNA"/>
</dbReference>
<dbReference type="RefSeq" id="WP_006490685.1">
    <property type="nucleotide sequence ID" value="NC_011000.1"/>
</dbReference>
<dbReference type="SMR" id="B4E7L1"/>
<dbReference type="KEGG" id="bcj:BCAL1507"/>
<dbReference type="eggNOG" id="COG0532">
    <property type="taxonomic scope" value="Bacteria"/>
</dbReference>
<dbReference type="HOGENOM" id="CLU_006301_6_0_4"/>
<dbReference type="BioCyc" id="BCEN216591:G1G1V-1676-MONOMER"/>
<dbReference type="Proteomes" id="UP000001035">
    <property type="component" value="Chromosome 1"/>
</dbReference>
<dbReference type="GO" id="GO:0005829">
    <property type="term" value="C:cytosol"/>
    <property type="evidence" value="ECO:0007669"/>
    <property type="project" value="TreeGrafter"/>
</dbReference>
<dbReference type="GO" id="GO:0005525">
    <property type="term" value="F:GTP binding"/>
    <property type="evidence" value="ECO:0007669"/>
    <property type="project" value="UniProtKB-KW"/>
</dbReference>
<dbReference type="GO" id="GO:0003924">
    <property type="term" value="F:GTPase activity"/>
    <property type="evidence" value="ECO:0007669"/>
    <property type="project" value="UniProtKB-UniRule"/>
</dbReference>
<dbReference type="GO" id="GO:0097216">
    <property type="term" value="F:guanosine tetraphosphate binding"/>
    <property type="evidence" value="ECO:0007669"/>
    <property type="project" value="UniProtKB-ARBA"/>
</dbReference>
<dbReference type="GO" id="GO:0003743">
    <property type="term" value="F:translation initiation factor activity"/>
    <property type="evidence" value="ECO:0007669"/>
    <property type="project" value="UniProtKB-UniRule"/>
</dbReference>
<dbReference type="CDD" id="cd01887">
    <property type="entry name" value="IF2_eIF5B"/>
    <property type="match status" value="1"/>
</dbReference>
<dbReference type="CDD" id="cd03702">
    <property type="entry name" value="IF2_mtIF2_II"/>
    <property type="match status" value="1"/>
</dbReference>
<dbReference type="CDD" id="cd03692">
    <property type="entry name" value="mtIF2_IVc"/>
    <property type="match status" value="1"/>
</dbReference>
<dbReference type="FunFam" id="2.40.30.10:FF:000007">
    <property type="entry name" value="Translation initiation factor IF-2"/>
    <property type="match status" value="1"/>
</dbReference>
<dbReference type="FunFam" id="2.40.30.10:FF:000008">
    <property type="entry name" value="Translation initiation factor IF-2"/>
    <property type="match status" value="1"/>
</dbReference>
<dbReference type="FunFam" id="3.40.50.10050:FF:000001">
    <property type="entry name" value="Translation initiation factor IF-2"/>
    <property type="match status" value="1"/>
</dbReference>
<dbReference type="FunFam" id="3.40.50.300:FF:000019">
    <property type="entry name" value="Translation initiation factor IF-2"/>
    <property type="match status" value="1"/>
</dbReference>
<dbReference type="Gene3D" id="3.40.50.300">
    <property type="entry name" value="P-loop containing nucleotide triphosphate hydrolases"/>
    <property type="match status" value="1"/>
</dbReference>
<dbReference type="Gene3D" id="3.30.56.50">
    <property type="entry name" value="Putative DNA-binding domain, N-terminal subdomain of bacterial translation initiation factor IF2"/>
    <property type="match status" value="1"/>
</dbReference>
<dbReference type="Gene3D" id="2.40.30.10">
    <property type="entry name" value="Translation factors"/>
    <property type="match status" value="2"/>
</dbReference>
<dbReference type="Gene3D" id="3.40.50.10050">
    <property type="entry name" value="Translation initiation factor IF- 2, domain 3"/>
    <property type="match status" value="1"/>
</dbReference>
<dbReference type="HAMAP" id="MF_00100_B">
    <property type="entry name" value="IF_2_B"/>
    <property type="match status" value="1"/>
</dbReference>
<dbReference type="InterPro" id="IPR009061">
    <property type="entry name" value="DNA-bd_dom_put_sf"/>
</dbReference>
<dbReference type="InterPro" id="IPR053905">
    <property type="entry name" value="EF-G-like_DII"/>
</dbReference>
<dbReference type="InterPro" id="IPR004161">
    <property type="entry name" value="EFTu-like_2"/>
</dbReference>
<dbReference type="InterPro" id="IPR013575">
    <property type="entry name" value="IF2_assoc_dom_bac"/>
</dbReference>
<dbReference type="InterPro" id="IPR044145">
    <property type="entry name" value="IF2_II"/>
</dbReference>
<dbReference type="InterPro" id="IPR006847">
    <property type="entry name" value="IF2_N"/>
</dbReference>
<dbReference type="InterPro" id="IPR027417">
    <property type="entry name" value="P-loop_NTPase"/>
</dbReference>
<dbReference type="InterPro" id="IPR005225">
    <property type="entry name" value="Small_GTP-bd"/>
</dbReference>
<dbReference type="InterPro" id="IPR000795">
    <property type="entry name" value="T_Tr_GTP-bd_dom"/>
</dbReference>
<dbReference type="InterPro" id="IPR000178">
    <property type="entry name" value="TF_IF2_bacterial-like"/>
</dbReference>
<dbReference type="InterPro" id="IPR015760">
    <property type="entry name" value="TIF_IF2"/>
</dbReference>
<dbReference type="InterPro" id="IPR023115">
    <property type="entry name" value="TIF_IF2_dom3"/>
</dbReference>
<dbReference type="InterPro" id="IPR036925">
    <property type="entry name" value="TIF_IF2_dom3_sf"/>
</dbReference>
<dbReference type="InterPro" id="IPR009000">
    <property type="entry name" value="Transl_B-barrel_sf"/>
</dbReference>
<dbReference type="NCBIfam" id="TIGR00487">
    <property type="entry name" value="IF-2"/>
    <property type="match status" value="1"/>
</dbReference>
<dbReference type="NCBIfam" id="TIGR00231">
    <property type="entry name" value="small_GTP"/>
    <property type="match status" value="1"/>
</dbReference>
<dbReference type="PANTHER" id="PTHR43381:SF5">
    <property type="entry name" value="TR-TYPE G DOMAIN-CONTAINING PROTEIN"/>
    <property type="match status" value="1"/>
</dbReference>
<dbReference type="PANTHER" id="PTHR43381">
    <property type="entry name" value="TRANSLATION INITIATION FACTOR IF-2-RELATED"/>
    <property type="match status" value="1"/>
</dbReference>
<dbReference type="Pfam" id="PF22042">
    <property type="entry name" value="EF-G_D2"/>
    <property type="match status" value="1"/>
</dbReference>
<dbReference type="Pfam" id="PF00009">
    <property type="entry name" value="GTP_EFTU"/>
    <property type="match status" value="1"/>
</dbReference>
<dbReference type="Pfam" id="PF03144">
    <property type="entry name" value="GTP_EFTU_D2"/>
    <property type="match status" value="1"/>
</dbReference>
<dbReference type="Pfam" id="PF11987">
    <property type="entry name" value="IF-2"/>
    <property type="match status" value="1"/>
</dbReference>
<dbReference type="Pfam" id="PF08364">
    <property type="entry name" value="IF2_assoc"/>
    <property type="match status" value="1"/>
</dbReference>
<dbReference type="Pfam" id="PF04760">
    <property type="entry name" value="IF2_N"/>
    <property type="match status" value="2"/>
</dbReference>
<dbReference type="SUPFAM" id="SSF52156">
    <property type="entry name" value="Initiation factor IF2/eIF5b, domain 3"/>
    <property type="match status" value="1"/>
</dbReference>
<dbReference type="SUPFAM" id="SSF52540">
    <property type="entry name" value="P-loop containing nucleoside triphosphate hydrolases"/>
    <property type="match status" value="1"/>
</dbReference>
<dbReference type="SUPFAM" id="SSF46955">
    <property type="entry name" value="Putative DNA-binding domain"/>
    <property type="match status" value="1"/>
</dbReference>
<dbReference type="SUPFAM" id="SSF50447">
    <property type="entry name" value="Translation proteins"/>
    <property type="match status" value="2"/>
</dbReference>
<dbReference type="PROSITE" id="PS51722">
    <property type="entry name" value="G_TR_2"/>
    <property type="match status" value="1"/>
</dbReference>
<dbReference type="PROSITE" id="PS01176">
    <property type="entry name" value="IF2"/>
    <property type="match status" value="1"/>
</dbReference>
<comment type="function">
    <text evidence="2">One of the essential components for the initiation of protein synthesis. Protects formylmethionyl-tRNA from spontaneous hydrolysis and promotes its binding to the 30S ribosomal subunits. Also involved in the hydrolysis of GTP during the formation of the 70S ribosomal complex.</text>
</comment>
<comment type="subcellular location">
    <subcellularLocation>
        <location evidence="2">Cytoplasm</location>
    </subcellularLocation>
</comment>
<comment type="similarity">
    <text evidence="2">Belongs to the TRAFAC class translation factor GTPase superfamily. Classic translation factor GTPase family. IF-2 subfamily.</text>
</comment>
<organism>
    <name type="scientific">Burkholderia cenocepacia (strain ATCC BAA-245 / DSM 16553 / LMG 16656 / NCTC 13227 / J2315 / CF5610)</name>
    <name type="common">Burkholderia cepacia (strain J2315)</name>
    <dbReference type="NCBI Taxonomy" id="216591"/>
    <lineage>
        <taxon>Bacteria</taxon>
        <taxon>Pseudomonadati</taxon>
        <taxon>Pseudomonadota</taxon>
        <taxon>Betaproteobacteria</taxon>
        <taxon>Burkholderiales</taxon>
        <taxon>Burkholderiaceae</taxon>
        <taxon>Burkholderia</taxon>
        <taxon>Burkholderia cepacia complex</taxon>
    </lineage>
</organism>
<accession>B4E7L1</accession>